<reference key="1">
    <citation type="journal article" date="1999" name="Gene">
        <title>Two additional type IIA Ca(2+)-ATPases are expressed in Arabidopsis thaliana: evidence that type IIA sub-groups exist.</title>
        <authorList>
            <person name="Pittman J.K."/>
            <person name="Mills R.F."/>
            <person name="O'Connor C.D."/>
            <person name="Williams L.E."/>
        </authorList>
    </citation>
    <scope>NUCLEOTIDE SEQUENCE [MRNA]</scope>
    <source>
        <strain>cv. Columbia</strain>
    </source>
</reference>
<reference key="2">
    <citation type="journal article" date="1999" name="Nature">
        <title>Sequence and analysis of chromosome 4 of the plant Arabidopsis thaliana.</title>
        <authorList>
            <person name="Mayer K.F.X."/>
            <person name="Schueller C."/>
            <person name="Wambutt R."/>
            <person name="Murphy G."/>
            <person name="Volckaert G."/>
            <person name="Pohl T."/>
            <person name="Duesterhoeft A."/>
            <person name="Stiekema W."/>
            <person name="Entian K.-D."/>
            <person name="Terryn N."/>
            <person name="Harris B."/>
            <person name="Ansorge W."/>
            <person name="Brandt P."/>
            <person name="Grivell L.A."/>
            <person name="Rieger M."/>
            <person name="Weichselgartner M."/>
            <person name="de Simone V."/>
            <person name="Obermaier B."/>
            <person name="Mache R."/>
            <person name="Mueller M."/>
            <person name="Kreis M."/>
            <person name="Delseny M."/>
            <person name="Puigdomenech P."/>
            <person name="Watson M."/>
            <person name="Schmidtheini T."/>
            <person name="Reichert B."/>
            <person name="Portetelle D."/>
            <person name="Perez-Alonso M."/>
            <person name="Boutry M."/>
            <person name="Bancroft I."/>
            <person name="Vos P."/>
            <person name="Hoheisel J."/>
            <person name="Zimmermann W."/>
            <person name="Wedler H."/>
            <person name="Ridley P."/>
            <person name="Langham S.-A."/>
            <person name="McCullagh B."/>
            <person name="Bilham L."/>
            <person name="Robben J."/>
            <person name="van der Schueren J."/>
            <person name="Grymonprez B."/>
            <person name="Chuang Y.-J."/>
            <person name="Vandenbussche F."/>
            <person name="Braeken M."/>
            <person name="Weltjens I."/>
            <person name="Voet M."/>
            <person name="Bastiaens I."/>
            <person name="Aert R."/>
            <person name="Defoor E."/>
            <person name="Weitzenegger T."/>
            <person name="Bothe G."/>
            <person name="Ramsperger U."/>
            <person name="Hilbert H."/>
            <person name="Braun M."/>
            <person name="Holzer E."/>
            <person name="Brandt A."/>
            <person name="Peters S."/>
            <person name="van Staveren M."/>
            <person name="Dirkse W."/>
            <person name="Mooijman P."/>
            <person name="Klein Lankhorst R."/>
            <person name="Rose M."/>
            <person name="Hauf J."/>
            <person name="Koetter P."/>
            <person name="Berneiser S."/>
            <person name="Hempel S."/>
            <person name="Feldpausch M."/>
            <person name="Lamberth S."/>
            <person name="Van den Daele H."/>
            <person name="De Keyser A."/>
            <person name="Buysshaert C."/>
            <person name="Gielen J."/>
            <person name="Villarroel R."/>
            <person name="De Clercq R."/>
            <person name="van Montagu M."/>
            <person name="Rogers J."/>
            <person name="Cronin A."/>
            <person name="Quail M.A."/>
            <person name="Bray-Allen S."/>
            <person name="Clark L."/>
            <person name="Doggett J."/>
            <person name="Hall S."/>
            <person name="Kay M."/>
            <person name="Lennard N."/>
            <person name="McLay K."/>
            <person name="Mayes R."/>
            <person name="Pettett A."/>
            <person name="Rajandream M.A."/>
            <person name="Lyne M."/>
            <person name="Benes V."/>
            <person name="Rechmann S."/>
            <person name="Borkova D."/>
            <person name="Bloecker H."/>
            <person name="Scharfe M."/>
            <person name="Grimm M."/>
            <person name="Loehnert T.-H."/>
            <person name="Dose S."/>
            <person name="de Haan M."/>
            <person name="Maarse A.C."/>
            <person name="Schaefer M."/>
            <person name="Mueller-Auer S."/>
            <person name="Gabel C."/>
            <person name="Fuchs M."/>
            <person name="Fartmann B."/>
            <person name="Granderath K."/>
            <person name="Dauner D."/>
            <person name="Herzl A."/>
            <person name="Neumann S."/>
            <person name="Argiriou A."/>
            <person name="Vitale D."/>
            <person name="Liguori R."/>
            <person name="Piravandi E."/>
            <person name="Massenet O."/>
            <person name="Quigley F."/>
            <person name="Clabauld G."/>
            <person name="Muendlein A."/>
            <person name="Felber R."/>
            <person name="Schnabl S."/>
            <person name="Hiller R."/>
            <person name="Schmidt W."/>
            <person name="Lecharny A."/>
            <person name="Aubourg S."/>
            <person name="Chefdor F."/>
            <person name="Cooke R."/>
            <person name="Berger C."/>
            <person name="Monfort A."/>
            <person name="Casacuberta E."/>
            <person name="Gibbons T."/>
            <person name="Weber N."/>
            <person name="Vandenbol M."/>
            <person name="Bargues M."/>
            <person name="Terol J."/>
            <person name="Torres A."/>
            <person name="Perez-Perez A."/>
            <person name="Purnelle B."/>
            <person name="Bent E."/>
            <person name="Johnson S."/>
            <person name="Tacon D."/>
            <person name="Jesse T."/>
            <person name="Heijnen L."/>
            <person name="Schwarz S."/>
            <person name="Scholler P."/>
            <person name="Heber S."/>
            <person name="Francs P."/>
            <person name="Bielke C."/>
            <person name="Frishman D."/>
            <person name="Haase D."/>
            <person name="Lemcke K."/>
            <person name="Mewes H.-W."/>
            <person name="Stocker S."/>
            <person name="Zaccaria P."/>
            <person name="Bevan M."/>
            <person name="Wilson R.K."/>
            <person name="de la Bastide M."/>
            <person name="Habermann K."/>
            <person name="Parnell L."/>
            <person name="Dedhia N."/>
            <person name="Gnoj L."/>
            <person name="Schutz K."/>
            <person name="Huang E."/>
            <person name="Spiegel L."/>
            <person name="Sekhon M."/>
            <person name="Murray J."/>
            <person name="Sheet P."/>
            <person name="Cordes M."/>
            <person name="Abu-Threideh J."/>
            <person name="Stoneking T."/>
            <person name="Kalicki J."/>
            <person name="Graves T."/>
            <person name="Harmon G."/>
            <person name="Edwards J."/>
            <person name="Latreille P."/>
            <person name="Courtney L."/>
            <person name="Cloud J."/>
            <person name="Abbott A."/>
            <person name="Scott K."/>
            <person name="Johnson D."/>
            <person name="Minx P."/>
            <person name="Bentley D."/>
            <person name="Fulton B."/>
            <person name="Miller N."/>
            <person name="Greco T."/>
            <person name="Kemp K."/>
            <person name="Kramer J."/>
            <person name="Fulton L."/>
            <person name="Mardis E."/>
            <person name="Dante M."/>
            <person name="Pepin K."/>
            <person name="Hillier L.W."/>
            <person name="Nelson J."/>
            <person name="Spieth J."/>
            <person name="Ryan E."/>
            <person name="Andrews S."/>
            <person name="Geisel C."/>
            <person name="Layman D."/>
            <person name="Du H."/>
            <person name="Ali J."/>
            <person name="Berghoff A."/>
            <person name="Jones K."/>
            <person name="Drone K."/>
            <person name="Cotton M."/>
            <person name="Joshu C."/>
            <person name="Antonoiu B."/>
            <person name="Zidanic M."/>
            <person name="Strong C."/>
            <person name="Sun H."/>
            <person name="Lamar B."/>
            <person name="Yordan C."/>
            <person name="Ma P."/>
            <person name="Zhong J."/>
            <person name="Preston R."/>
            <person name="Vil D."/>
            <person name="Shekher M."/>
            <person name="Matero A."/>
            <person name="Shah R."/>
            <person name="Swaby I.K."/>
            <person name="O'Shaughnessy A."/>
            <person name="Rodriguez M."/>
            <person name="Hoffman J."/>
            <person name="Till S."/>
            <person name="Granat S."/>
            <person name="Shohdy N."/>
            <person name="Hasegawa A."/>
            <person name="Hameed A."/>
            <person name="Lodhi M."/>
            <person name="Johnson A."/>
            <person name="Chen E."/>
            <person name="Marra M.A."/>
            <person name="Martienssen R."/>
            <person name="McCombie W.R."/>
        </authorList>
    </citation>
    <scope>NUCLEOTIDE SEQUENCE [LARGE SCALE GENOMIC DNA]</scope>
    <source>
        <strain>cv. Columbia</strain>
    </source>
</reference>
<reference key="3">
    <citation type="journal article" date="2017" name="Plant J.">
        <title>Araport11: a complete reannotation of the Arabidopsis thaliana reference genome.</title>
        <authorList>
            <person name="Cheng C.Y."/>
            <person name="Krishnakumar V."/>
            <person name="Chan A.P."/>
            <person name="Thibaud-Nissen F."/>
            <person name="Schobel S."/>
            <person name="Town C.D."/>
        </authorList>
    </citation>
    <scope>GENOME REANNOTATION</scope>
    <source>
        <strain>cv. Columbia</strain>
    </source>
</reference>
<reference key="4">
    <citation type="journal article" date="2009" name="J. Proteomics">
        <title>Phosphoproteomic analysis of nuclei-enriched fractions from Arabidopsis thaliana.</title>
        <authorList>
            <person name="Jones A.M.E."/>
            <person name="MacLean D."/>
            <person name="Studholme D.J."/>
            <person name="Serna-Sanz A."/>
            <person name="Andreasson E."/>
            <person name="Rathjen J.P."/>
            <person name="Peck S.C."/>
        </authorList>
    </citation>
    <scope>IDENTIFICATION BY MASS SPECTROMETRY [LARGE SCALE ANALYSIS]</scope>
    <source>
        <strain>cv. Columbia</strain>
    </source>
</reference>
<comment type="function">
    <text>This magnesium-dependent enzyme catalyzes the hydrolysis of ATP coupled with the translocation of calcium from the cytosol to an endomembrane compartment.</text>
</comment>
<comment type="catalytic activity">
    <reaction>
        <text>Ca(2+)(in) + ATP + H2O = Ca(2+)(out) + ADP + phosphate + H(+)</text>
        <dbReference type="Rhea" id="RHEA:18105"/>
        <dbReference type="ChEBI" id="CHEBI:15377"/>
        <dbReference type="ChEBI" id="CHEBI:15378"/>
        <dbReference type="ChEBI" id="CHEBI:29108"/>
        <dbReference type="ChEBI" id="CHEBI:30616"/>
        <dbReference type="ChEBI" id="CHEBI:43474"/>
        <dbReference type="ChEBI" id="CHEBI:456216"/>
        <dbReference type="EC" id="7.2.2.10"/>
    </reaction>
</comment>
<comment type="subcellular location">
    <subcellularLocation>
        <location>Membrane</location>
        <topology>Multi-pass membrane protein</topology>
    </subcellularLocation>
</comment>
<comment type="similarity">
    <text evidence="3">Belongs to the cation transport ATPase (P-type) (TC 3.A.3) family. Type IIA subfamily.</text>
</comment>
<dbReference type="EC" id="7.2.2.10"/>
<dbReference type="EMBL" id="AJ132387">
    <property type="protein sequence ID" value="CAA10659.1"/>
    <property type="molecule type" value="mRNA"/>
</dbReference>
<dbReference type="EMBL" id="AF013294">
    <property type="protein sequence ID" value="AAB62850.1"/>
    <property type="molecule type" value="Genomic_DNA"/>
</dbReference>
<dbReference type="EMBL" id="AL161472">
    <property type="protein sequence ID" value="CAB80899.1"/>
    <property type="molecule type" value="Genomic_DNA"/>
</dbReference>
<dbReference type="EMBL" id="CP002687">
    <property type="protein sequence ID" value="AEE81953.1"/>
    <property type="molecule type" value="Genomic_DNA"/>
</dbReference>
<dbReference type="EMBL" id="CP002687">
    <property type="protein sequence ID" value="ANM67918.1"/>
    <property type="molecule type" value="Genomic_DNA"/>
</dbReference>
<dbReference type="PIR" id="T01556">
    <property type="entry name" value="T01556"/>
</dbReference>
<dbReference type="RefSeq" id="NP_001329712.1">
    <property type="nucleotide sequence ID" value="NM_001340276.1"/>
</dbReference>
<dbReference type="RefSeq" id="NP_191999.1">
    <property type="nucleotide sequence ID" value="NM_116317.4"/>
</dbReference>
<dbReference type="SMR" id="O23087"/>
<dbReference type="BioGRID" id="13275">
    <property type="interactions" value="4"/>
</dbReference>
<dbReference type="FunCoup" id="O23087">
    <property type="interactions" value="396"/>
</dbReference>
<dbReference type="IntAct" id="O23087">
    <property type="interactions" value="2"/>
</dbReference>
<dbReference type="STRING" id="3702.O23087"/>
<dbReference type="SwissPalm" id="O23087"/>
<dbReference type="PaxDb" id="3702-AT4G00900.1"/>
<dbReference type="ProteomicsDB" id="224716"/>
<dbReference type="EnsemblPlants" id="AT4G00900.1">
    <property type="protein sequence ID" value="AT4G00900.1"/>
    <property type="gene ID" value="AT4G00900"/>
</dbReference>
<dbReference type="EnsemblPlants" id="AT4G00900.2">
    <property type="protein sequence ID" value="AT4G00900.2"/>
    <property type="gene ID" value="AT4G00900"/>
</dbReference>
<dbReference type="GeneID" id="827984"/>
<dbReference type="Gramene" id="AT4G00900.1">
    <property type="protein sequence ID" value="AT4G00900.1"/>
    <property type="gene ID" value="AT4G00900"/>
</dbReference>
<dbReference type="Gramene" id="AT4G00900.2">
    <property type="protein sequence ID" value="AT4G00900.2"/>
    <property type="gene ID" value="AT4G00900"/>
</dbReference>
<dbReference type="KEGG" id="ath:AT4G00900"/>
<dbReference type="Araport" id="AT4G00900"/>
<dbReference type="TAIR" id="AT4G00900">
    <property type="gene designation" value="ECA2"/>
</dbReference>
<dbReference type="eggNOG" id="KOG0202">
    <property type="taxonomic scope" value="Eukaryota"/>
</dbReference>
<dbReference type="HOGENOM" id="CLU_002360_3_3_1"/>
<dbReference type="InParanoid" id="O23087"/>
<dbReference type="OMA" id="PVCSIVF"/>
<dbReference type="PhylomeDB" id="O23087"/>
<dbReference type="BioCyc" id="ARA:AT4G00900-MONOMER"/>
<dbReference type="BioCyc" id="MetaCyc:MONOMER-14601"/>
<dbReference type="BRENDA" id="7.2.2.10">
    <property type="organism ID" value="399"/>
</dbReference>
<dbReference type="PRO" id="PR:O23087"/>
<dbReference type="Proteomes" id="UP000006548">
    <property type="component" value="Chromosome 4"/>
</dbReference>
<dbReference type="ExpressionAtlas" id="O23087">
    <property type="expression patterns" value="baseline and differential"/>
</dbReference>
<dbReference type="GO" id="GO:0005783">
    <property type="term" value="C:endoplasmic reticulum"/>
    <property type="evidence" value="ECO:0007005"/>
    <property type="project" value="TAIR"/>
</dbReference>
<dbReference type="GO" id="GO:0016020">
    <property type="term" value="C:membrane"/>
    <property type="evidence" value="ECO:0007669"/>
    <property type="project" value="UniProtKB-SubCell"/>
</dbReference>
<dbReference type="GO" id="GO:0005524">
    <property type="term" value="F:ATP binding"/>
    <property type="evidence" value="ECO:0007669"/>
    <property type="project" value="UniProtKB-KW"/>
</dbReference>
<dbReference type="GO" id="GO:0016887">
    <property type="term" value="F:ATP hydrolysis activity"/>
    <property type="evidence" value="ECO:0007669"/>
    <property type="project" value="InterPro"/>
</dbReference>
<dbReference type="GO" id="GO:0046872">
    <property type="term" value="F:metal ion binding"/>
    <property type="evidence" value="ECO:0007669"/>
    <property type="project" value="UniProtKB-KW"/>
</dbReference>
<dbReference type="GO" id="GO:0005388">
    <property type="term" value="F:P-type calcium transporter activity"/>
    <property type="evidence" value="ECO:0000250"/>
    <property type="project" value="TAIR"/>
</dbReference>
<dbReference type="GO" id="GO:0006816">
    <property type="term" value="P:calcium ion transport"/>
    <property type="evidence" value="ECO:0000250"/>
    <property type="project" value="TAIR"/>
</dbReference>
<dbReference type="CDD" id="cd02083">
    <property type="entry name" value="P-type_ATPase_SERCA"/>
    <property type="match status" value="1"/>
</dbReference>
<dbReference type="FunFam" id="3.40.1110.10:FF:000021">
    <property type="entry name" value="calcium-transporting ATPase, endoplasmic reticulum-type"/>
    <property type="match status" value="1"/>
</dbReference>
<dbReference type="FunFam" id="2.70.150.10:FF:000014">
    <property type="entry name" value="Calcium-transporting ATPase, putative"/>
    <property type="match status" value="1"/>
</dbReference>
<dbReference type="FunFam" id="3.40.50.1000:FF:000028">
    <property type="entry name" value="Calcium-transporting P-type ATPase, putative"/>
    <property type="match status" value="1"/>
</dbReference>
<dbReference type="FunFam" id="1.20.1110.10:FF:000077">
    <property type="entry name" value="ECA1 (ER-TYPE CA2+-ATPASE 1)"/>
    <property type="match status" value="1"/>
</dbReference>
<dbReference type="FunFam" id="1.20.1110.10:FF:000065">
    <property type="entry name" value="Sarcoplasmic/endoplasmic reticulum calcium ATPase 1"/>
    <property type="match status" value="1"/>
</dbReference>
<dbReference type="Gene3D" id="3.40.1110.10">
    <property type="entry name" value="Calcium-transporting ATPase, cytoplasmic domain N"/>
    <property type="match status" value="1"/>
</dbReference>
<dbReference type="Gene3D" id="2.70.150.10">
    <property type="entry name" value="Calcium-transporting ATPase, cytoplasmic transduction domain A"/>
    <property type="match status" value="1"/>
</dbReference>
<dbReference type="Gene3D" id="1.20.1110.10">
    <property type="entry name" value="Calcium-transporting ATPase, transmembrane domain"/>
    <property type="match status" value="1"/>
</dbReference>
<dbReference type="Gene3D" id="3.40.50.1000">
    <property type="entry name" value="HAD superfamily/HAD-like"/>
    <property type="match status" value="1"/>
</dbReference>
<dbReference type="InterPro" id="IPR006068">
    <property type="entry name" value="ATPase_P-typ_cation-transptr_C"/>
</dbReference>
<dbReference type="InterPro" id="IPR004014">
    <property type="entry name" value="ATPase_P-typ_cation-transptr_N"/>
</dbReference>
<dbReference type="InterPro" id="IPR023299">
    <property type="entry name" value="ATPase_P-typ_cyto_dom_N"/>
</dbReference>
<dbReference type="InterPro" id="IPR018303">
    <property type="entry name" value="ATPase_P-typ_P_site"/>
</dbReference>
<dbReference type="InterPro" id="IPR023298">
    <property type="entry name" value="ATPase_P-typ_TM_dom_sf"/>
</dbReference>
<dbReference type="InterPro" id="IPR008250">
    <property type="entry name" value="ATPase_P-typ_transduc_dom_A_sf"/>
</dbReference>
<dbReference type="InterPro" id="IPR036412">
    <property type="entry name" value="HAD-like_sf"/>
</dbReference>
<dbReference type="InterPro" id="IPR023214">
    <property type="entry name" value="HAD_sf"/>
</dbReference>
<dbReference type="InterPro" id="IPR001757">
    <property type="entry name" value="P_typ_ATPase"/>
</dbReference>
<dbReference type="InterPro" id="IPR044492">
    <property type="entry name" value="P_typ_ATPase_HD_dom"/>
</dbReference>
<dbReference type="NCBIfam" id="TIGR01494">
    <property type="entry name" value="ATPase_P-type"/>
    <property type="match status" value="3"/>
</dbReference>
<dbReference type="PANTHER" id="PTHR42861">
    <property type="entry name" value="CALCIUM-TRANSPORTING ATPASE"/>
    <property type="match status" value="1"/>
</dbReference>
<dbReference type="Pfam" id="PF13246">
    <property type="entry name" value="Cation_ATPase"/>
    <property type="match status" value="1"/>
</dbReference>
<dbReference type="Pfam" id="PF00689">
    <property type="entry name" value="Cation_ATPase_C"/>
    <property type="match status" value="1"/>
</dbReference>
<dbReference type="Pfam" id="PF00690">
    <property type="entry name" value="Cation_ATPase_N"/>
    <property type="match status" value="1"/>
</dbReference>
<dbReference type="Pfam" id="PF00122">
    <property type="entry name" value="E1-E2_ATPase"/>
    <property type="match status" value="1"/>
</dbReference>
<dbReference type="Pfam" id="PF00702">
    <property type="entry name" value="Hydrolase"/>
    <property type="match status" value="1"/>
</dbReference>
<dbReference type="PRINTS" id="PR00119">
    <property type="entry name" value="CATATPASE"/>
</dbReference>
<dbReference type="PRINTS" id="PR00121">
    <property type="entry name" value="NAKATPASE"/>
</dbReference>
<dbReference type="SFLD" id="SFLDG00002">
    <property type="entry name" value="C1.7:_P-type_atpase_like"/>
    <property type="match status" value="1"/>
</dbReference>
<dbReference type="SFLD" id="SFLDF00027">
    <property type="entry name" value="p-type_atpase"/>
    <property type="match status" value="1"/>
</dbReference>
<dbReference type="SMART" id="SM00831">
    <property type="entry name" value="Cation_ATPase_N"/>
    <property type="match status" value="1"/>
</dbReference>
<dbReference type="SUPFAM" id="SSF81653">
    <property type="entry name" value="Calcium ATPase, transduction domain A"/>
    <property type="match status" value="1"/>
</dbReference>
<dbReference type="SUPFAM" id="SSF81665">
    <property type="entry name" value="Calcium ATPase, transmembrane domain M"/>
    <property type="match status" value="1"/>
</dbReference>
<dbReference type="SUPFAM" id="SSF56784">
    <property type="entry name" value="HAD-like"/>
    <property type="match status" value="1"/>
</dbReference>
<dbReference type="SUPFAM" id="SSF81660">
    <property type="entry name" value="Metal cation-transporting ATPase, ATP-binding domain N"/>
    <property type="match status" value="1"/>
</dbReference>
<dbReference type="PROSITE" id="PS00154">
    <property type="entry name" value="ATPASE_E1_E2"/>
    <property type="match status" value="1"/>
</dbReference>
<protein>
    <recommendedName>
        <fullName>Calcium-transporting ATPase 2, endoplasmic reticulum-type</fullName>
        <ecNumber>7.2.2.10</ecNumber>
    </recommendedName>
</protein>
<proteinExistence type="evidence at protein level"/>
<gene>
    <name type="primary">ECA2</name>
    <name type="synonym">ACA5</name>
    <name type="ordered locus">At4g00900</name>
    <name type="ORF">A_TM018A10.4</name>
</gene>
<organism>
    <name type="scientific">Arabidopsis thaliana</name>
    <name type="common">Mouse-ear cress</name>
    <dbReference type="NCBI Taxonomy" id="3702"/>
    <lineage>
        <taxon>Eukaryota</taxon>
        <taxon>Viridiplantae</taxon>
        <taxon>Streptophyta</taxon>
        <taxon>Embryophyta</taxon>
        <taxon>Tracheophyta</taxon>
        <taxon>Spermatophyta</taxon>
        <taxon>Magnoliopsida</taxon>
        <taxon>eudicotyledons</taxon>
        <taxon>Gunneridae</taxon>
        <taxon>Pentapetalae</taxon>
        <taxon>rosids</taxon>
        <taxon>malvids</taxon>
        <taxon>Brassicales</taxon>
        <taxon>Brassicaceae</taxon>
        <taxon>Camelineae</taxon>
        <taxon>Arabidopsis</taxon>
    </lineage>
</organism>
<accession>O23087</accession>
<keyword id="KW-0067">ATP-binding</keyword>
<keyword id="KW-0106">Calcium</keyword>
<keyword id="KW-0109">Calcium transport</keyword>
<keyword id="KW-0406">Ion transport</keyword>
<keyword id="KW-0460">Magnesium</keyword>
<keyword id="KW-0472">Membrane</keyword>
<keyword id="KW-0479">Metal-binding</keyword>
<keyword id="KW-0547">Nucleotide-binding</keyword>
<keyword id="KW-1185">Reference proteome</keyword>
<keyword id="KW-1278">Translocase</keyword>
<keyword id="KW-0812">Transmembrane</keyword>
<keyword id="KW-1133">Transmembrane helix</keyword>
<keyword id="KW-0813">Transport</keyword>
<sequence>MEEEKSFSAWSWSVEQCLKEYKTRLDKGLTSEDVQIRRQKYGFNELAKEKGKPLWHLVLEQFDDTLVKILLGAAFISFVLAFLGEEHGSGSGFEAFVEPFVIVLILILNAVVGVWQESNAEKALEALKEMQCESAKVLRDGNVLPNLPARELVPGDIVELNVGDKVPADMRVSGLKTSTLRVEQSSLTGEAMPVLKGANLVVMDDCELQGKENMVFAGTTVVNGSCVCIVTSIGMDTEIGKIQRQIHEASLEESETPLKKKLDEFGSRLTTAICIVCVLVWMINYKNFVSWDVVDGYKPVNIKFSFEKCTYYFKIAVALAVAAIPEGLPAVITTCLALGTRKMAQKNAIVRKLPSVETLGCTTVICSDKTGTLTTNQMSATEFFTLGGKTTTTRVFSVSGTTYDPKDGGIVDWGCNNMDANLQAVAEICSICNDAGVFYEGKLFRATGLPTEAALKVLVEKMGIPEKKNSENIEEVTNFSDNGSSVKLACCDWWNKRSKKVATLEFDRVRKSMSVIVSEPNGQNRLLVKGAAESILERSSFAQLADGSLVALDESSREVILKKHSEMTSKGLRCLGLAYKDELGEFSDYSSEEHPSHKKLLDPSSYSNIETNLIFVGVVGLRDPPREEVGRAIEDCRDAGIRVMVITGDNKSTAEAICCEIRLFSENEDLSQSSFTGKEFMSLPASRRSEILSKSGGKVFSRAEPRHKQEIVRMLKEMGEIVAMTGDGVNDAPALKLADIGIAMGITGTEVAKEASDMVLADDNFSTIVSAVAEGRSIYNNMKAFIRYMISSNVGEVISIFLTAALGIPECMIPVQLLWVNLVTDGPPATALGFNPADIDIMKKPPRKSDDCLIDSWVLIRYLVIGSYVGVATVGIFVLWYTQASFLGISLISDGHTLVSFTQLQNWSECSSWGTNFTATPYTVAGGLRTIAFENNPCDYFTLGKVKPMTLSLTVLVAIEMFNSLNALSEDNSLLTMPPWRNPWLLVAMTVSFALHCVILYVPFLANVFGIVPLSFREWFVVILVSFPVILIDEALKFIGRCRRTRIKKKIKTM</sequence>
<evidence type="ECO:0000250" key="1"/>
<evidence type="ECO:0000255" key="2"/>
<evidence type="ECO:0000305" key="3"/>
<name>ECA2_ARATH</name>
<feature type="chain" id="PRO_0000046406" description="Calcium-transporting ATPase 2, endoplasmic reticulum-type">
    <location>
        <begin position="1"/>
        <end position="1054"/>
    </location>
</feature>
<feature type="topological domain" description="Cytoplasmic" evidence="2">
    <location>
        <begin position="1"/>
        <end position="53"/>
    </location>
</feature>
<feature type="transmembrane region" description="Helical" evidence="2">
    <location>
        <begin position="54"/>
        <end position="74"/>
    </location>
</feature>
<feature type="topological domain" description="Lumenal" evidence="2">
    <location>
        <begin position="75"/>
        <end position="98"/>
    </location>
</feature>
<feature type="transmembrane region" description="Helical" evidence="2">
    <location>
        <begin position="99"/>
        <end position="118"/>
    </location>
</feature>
<feature type="topological domain" description="Cytoplasmic" evidence="2">
    <location>
        <begin position="119"/>
        <end position="262"/>
    </location>
</feature>
<feature type="transmembrane region" description="Helical" evidence="2">
    <location>
        <begin position="263"/>
        <end position="282"/>
    </location>
</feature>
<feature type="topological domain" description="Lumenal" evidence="2">
    <location>
        <begin position="283"/>
        <end position="312"/>
    </location>
</feature>
<feature type="transmembrane region" description="Helical" evidence="2">
    <location>
        <begin position="313"/>
        <end position="330"/>
    </location>
</feature>
<feature type="topological domain" description="Cytoplasmic" evidence="2">
    <location>
        <begin position="331"/>
        <end position="782"/>
    </location>
</feature>
<feature type="transmembrane region" description="Helical" evidence="2">
    <location>
        <begin position="783"/>
        <end position="802"/>
    </location>
</feature>
<feature type="topological domain" description="Lumenal" evidence="2">
    <location>
        <begin position="803"/>
        <end position="812"/>
    </location>
</feature>
<feature type="transmembrane region" description="Helical" evidence="2">
    <location>
        <begin position="813"/>
        <end position="833"/>
    </location>
</feature>
<feature type="topological domain" description="Cytoplasmic" evidence="2">
    <location>
        <begin position="834"/>
        <end position="853"/>
    </location>
</feature>
<feature type="transmembrane region" description="Helical" evidence="2">
    <location>
        <begin position="854"/>
        <end position="876"/>
    </location>
</feature>
<feature type="topological domain" description="Lumenal" evidence="2">
    <location>
        <begin position="877"/>
        <end position="949"/>
    </location>
</feature>
<feature type="transmembrane region" description="Helical" evidence="2">
    <location>
        <begin position="950"/>
        <end position="969"/>
    </location>
</feature>
<feature type="topological domain" description="Cytoplasmic" evidence="2">
    <location>
        <begin position="970"/>
        <end position="982"/>
    </location>
</feature>
<feature type="transmembrane region" description="Helical" evidence="2">
    <location>
        <begin position="983"/>
        <end position="1001"/>
    </location>
</feature>
<feature type="topological domain" description="Lumenal" evidence="2">
    <location>
        <begin position="1002"/>
        <end position="1016"/>
    </location>
</feature>
<feature type="transmembrane region" description="Helical" evidence="2">
    <location>
        <begin position="1017"/>
        <end position="1037"/>
    </location>
</feature>
<feature type="topological domain" description="Cytoplasmic" evidence="2">
    <location>
        <begin position="1038"/>
        <end position="1054"/>
    </location>
</feature>
<feature type="active site" description="4-aspartylphosphate intermediate" evidence="1">
    <location>
        <position position="368"/>
    </location>
</feature>
<feature type="binding site" evidence="1">
    <location>
        <position position="321"/>
    </location>
    <ligand>
        <name>Ca(2+)</name>
        <dbReference type="ChEBI" id="CHEBI:29108"/>
        <label>2</label>
    </ligand>
</feature>
<feature type="binding site" evidence="1">
    <location>
        <position position="322"/>
    </location>
    <ligand>
        <name>Ca(2+)</name>
        <dbReference type="ChEBI" id="CHEBI:29108"/>
        <label>2</label>
    </ligand>
</feature>
<feature type="binding site" evidence="1">
    <location>
        <position position="324"/>
    </location>
    <ligand>
        <name>Ca(2+)</name>
        <dbReference type="ChEBI" id="CHEBI:29108"/>
        <label>2</label>
    </ligand>
</feature>
<feature type="binding site" evidence="1">
    <location>
        <position position="326"/>
    </location>
    <ligand>
        <name>Ca(2+)</name>
        <dbReference type="ChEBI" id="CHEBI:29108"/>
        <label>2</label>
    </ligand>
</feature>
<feature type="binding site" evidence="1">
    <location>
        <position position="727"/>
    </location>
    <ligand>
        <name>Mg(2+)</name>
        <dbReference type="ChEBI" id="CHEBI:18420"/>
    </ligand>
</feature>
<feature type="binding site" evidence="1">
    <location>
        <position position="731"/>
    </location>
    <ligand>
        <name>Mg(2+)</name>
        <dbReference type="ChEBI" id="CHEBI:18420"/>
    </ligand>
</feature>
<feature type="binding site" evidence="1">
    <location>
        <position position="793"/>
    </location>
    <ligand>
        <name>Ca(2+)</name>
        <dbReference type="ChEBI" id="CHEBI:29108"/>
        <label>1</label>
    </ligand>
</feature>
<feature type="binding site" evidence="1">
    <location>
        <position position="796"/>
    </location>
    <ligand>
        <name>Ca(2+)</name>
        <dbReference type="ChEBI" id="CHEBI:29108"/>
        <label>1</label>
    </ligand>
</feature>
<feature type="binding site" evidence="1">
    <location>
        <position position="821"/>
    </location>
    <ligand>
        <name>Ca(2+)</name>
        <dbReference type="ChEBI" id="CHEBI:29108"/>
        <label>2</label>
    </ligand>
</feature>
<feature type="binding site" evidence="1">
    <location>
        <position position="824"/>
    </location>
    <ligand>
        <name>Ca(2+)</name>
        <dbReference type="ChEBI" id="CHEBI:29108"/>
        <label>1</label>
    </ligand>
</feature>
<feature type="binding site" evidence="1">
    <location>
        <position position="825"/>
    </location>
    <ligand>
        <name>Ca(2+)</name>
        <dbReference type="ChEBI" id="CHEBI:29108"/>
        <label>1</label>
    </ligand>
</feature>
<feature type="binding site" evidence="1">
    <location>
        <position position="825"/>
    </location>
    <ligand>
        <name>Ca(2+)</name>
        <dbReference type="ChEBI" id="CHEBI:29108"/>
        <label>2</label>
    </ligand>
</feature>
<feature type="binding site" evidence="1">
    <location>
        <position position="960"/>
    </location>
    <ligand>
        <name>Ca(2+)</name>
        <dbReference type="ChEBI" id="CHEBI:29108"/>
        <label>1</label>
    </ligand>
</feature>